<evidence type="ECO:0000255" key="1">
    <source>
        <dbReference type="HAMAP-Rule" id="MF_00081"/>
    </source>
</evidence>
<sequence>MLTERQLLILQTIIDDFIGSAQPVGSRTLAKKDEITYSSATIRNEMADLEELGFIEKTHSSSGRVPSEKGYRFYVDHLLAPQNLPNDEIVQIKDLFAERIFEAEKIAQQSAQILSELTNYTAIVLGPKLSTNKLKNVQIVPLDRQTAVAIIVTDTGHVQSKTITVPESVDLSDLEKMVNILNEKLSGVPMSELHNKIFKEIVTVLRGYVHNYDSAIKMLDGTFQVPLSEKIYFGGKANMLSQPEFHDIHKVRSLLTMIDNEAEFYDILRHKQVGIQVKIGRENSATAMEDCSLISATYSIGEEQLGTIAILGPTRMQYSRVISLLQLFTRQFTDGLKK</sequence>
<name>HRCA_BACC0</name>
<comment type="function">
    <text evidence="1">Negative regulator of class I heat shock genes (grpE-dnaK-dnaJ and groELS operons). Prevents heat-shock induction of these operons.</text>
</comment>
<comment type="similarity">
    <text evidence="1">Belongs to the HrcA family.</text>
</comment>
<organism>
    <name type="scientific">Bacillus cereus (strain AH820)</name>
    <dbReference type="NCBI Taxonomy" id="405535"/>
    <lineage>
        <taxon>Bacteria</taxon>
        <taxon>Bacillati</taxon>
        <taxon>Bacillota</taxon>
        <taxon>Bacilli</taxon>
        <taxon>Bacillales</taxon>
        <taxon>Bacillaceae</taxon>
        <taxon>Bacillus</taxon>
        <taxon>Bacillus cereus group</taxon>
    </lineage>
</organism>
<feature type="chain" id="PRO_1000117106" description="Heat-inducible transcription repressor HrcA">
    <location>
        <begin position="1"/>
        <end position="338"/>
    </location>
</feature>
<protein>
    <recommendedName>
        <fullName evidence="1">Heat-inducible transcription repressor HrcA</fullName>
    </recommendedName>
</protein>
<gene>
    <name evidence="1" type="primary">hrcA</name>
    <name type="ordered locus">BCAH820_4338</name>
</gene>
<keyword id="KW-0678">Repressor</keyword>
<keyword id="KW-0346">Stress response</keyword>
<keyword id="KW-0804">Transcription</keyword>
<keyword id="KW-0805">Transcription regulation</keyword>
<dbReference type="EMBL" id="CP001283">
    <property type="protein sequence ID" value="ACK87627.1"/>
    <property type="molecule type" value="Genomic_DNA"/>
</dbReference>
<dbReference type="RefSeq" id="WP_000954957.1">
    <property type="nucleotide sequence ID" value="NC_011773.1"/>
</dbReference>
<dbReference type="SMR" id="B7JN41"/>
<dbReference type="KEGG" id="bcu:BCAH820_4338"/>
<dbReference type="HOGENOM" id="CLU_050019_1_0_9"/>
<dbReference type="Proteomes" id="UP000001363">
    <property type="component" value="Chromosome"/>
</dbReference>
<dbReference type="GO" id="GO:0003677">
    <property type="term" value="F:DNA binding"/>
    <property type="evidence" value="ECO:0007669"/>
    <property type="project" value="InterPro"/>
</dbReference>
<dbReference type="GO" id="GO:0045892">
    <property type="term" value="P:negative regulation of DNA-templated transcription"/>
    <property type="evidence" value="ECO:0007669"/>
    <property type="project" value="UniProtKB-UniRule"/>
</dbReference>
<dbReference type="FunFam" id="1.10.10.10:FF:000049">
    <property type="entry name" value="Heat-inducible transcription repressor HrcA"/>
    <property type="match status" value="1"/>
</dbReference>
<dbReference type="FunFam" id="3.30.390.60:FF:000001">
    <property type="entry name" value="Heat-inducible transcription repressor HrcA"/>
    <property type="match status" value="1"/>
</dbReference>
<dbReference type="Gene3D" id="3.30.450.40">
    <property type="match status" value="1"/>
</dbReference>
<dbReference type="Gene3D" id="3.30.390.60">
    <property type="entry name" value="Heat-inducible transcription repressor hrca homolog, domain 3"/>
    <property type="match status" value="1"/>
</dbReference>
<dbReference type="Gene3D" id="1.10.10.10">
    <property type="entry name" value="Winged helix-like DNA-binding domain superfamily/Winged helix DNA-binding domain"/>
    <property type="match status" value="1"/>
</dbReference>
<dbReference type="HAMAP" id="MF_00081">
    <property type="entry name" value="HrcA"/>
    <property type="match status" value="1"/>
</dbReference>
<dbReference type="InterPro" id="IPR029016">
    <property type="entry name" value="GAF-like_dom_sf"/>
</dbReference>
<dbReference type="InterPro" id="IPR002571">
    <property type="entry name" value="HrcA"/>
</dbReference>
<dbReference type="InterPro" id="IPR021153">
    <property type="entry name" value="HrcA_C"/>
</dbReference>
<dbReference type="InterPro" id="IPR036388">
    <property type="entry name" value="WH-like_DNA-bd_sf"/>
</dbReference>
<dbReference type="InterPro" id="IPR036390">
    <property type="entry name" value="WH_DNA-bd_sf"/>
</dbReference>
<dbReference type="InterPro" id="IPR023120">
    <property type="entry name" value="WHTH_transcript_rep_HrcA_IDD"/>
</dbReference>
<dbReference type="NCBIfam" id="TIGR00331">
    <property type="entry name" value="hrcA"/>
    <property type="match status" value="1"/>
</dbReference>
<dbReference type="PANTHER" id="PTHR34824">
    <property type="entry name" value="HEAT-INDUCIBLE TRANSCRIPTION REPRESSOR HRCA"/>
    <property type="match status" value="1"/>
</dbReference>
<dbReference type="PANTHER" id="PTHR34824:SF1">
    <property type="entry name" value="HEAT-INDUCIBLE TRANSCRIPTION REPRESSOR HRCA"/>
    <property type="match status" value="1"/>
</dbReference>
<dbReference type="Pfam" id="PF01628">
    <property type="entry name" value="HrcA"/>
    <property type="match status" value="1"/>
</dbReference>
<dbReference type="PIRSF" id="PIRSF005485">
    <property type="entry name" value="HrcA"/>
    <property type="match status" value="1"/>
</dbReference>
<dbReference type="SUPFAM" id="SSF55781">
    <property type="entry name" value="GAF domain-like"/>
    <property type="match status" value="1"/>
</dbReference>
<dbReference type="SUPFAM" id="SSF46785">
    <property type="entry name" value="Winged helix' DNA-binding domain"/>
    <property type="match status" value="1"/>
</dbReference>
<proteinExistence type="inferred from homology"/>
<accession>B7JN41</accession>
<reference key="1">
    <citation type="submission" date="2008-10" db="EMBL/GenBank/DDBJ databases">
        <title>Genome sequence of Bacillus cereus AH820.</title>
        <authorList>
            <person name="Dodson R.J."/>
            <person name="Durkin A.S."/>
            <person name="Rosovitz M.J."/>
            <person name="Rasko D.A."/>
            <person name="Hoffmaster A."/>
            <person name="Ravel J."/>
            <person name="Sutton G."/>
        </authorList>
    </citation>
    <scope>NUCLEOTIDE SEQUENCE [LARGE SCALE GENOMIC DNA]</scope>
    <source>
        <strain>AH820</strain>
    </source>
</reference>